<proteinExistence type="inferred from homology"/>
<evidence type="ECO:0000255" key="1">
    <source>
        <dbReference type="HAMAP-Rule" id="MF_01170"/>
    </source>
</evidence>
<name>RACA_BACCQ</name>
<feature type="chain" id="PRO_1000164364" description="Chromosome-anchoring protein RacA">
    <location>
        <begin position="1"/>
        <end position="180"/>
    </location>
</feature>
<feature type="DNA-binding region" description="H-T-H motif" evidence="1">
    <location>
        <begin position="5"/>
        <end position="25"/>
    </location>
</feature>
<feature type="coiled-coil region" evidence="1">
    <location>
        <begin position="89"/>
        <end position="151"/>
    </location>
</feature>
<protein>
    <recommendedName>
        <fullName evidence="1">Chromosome-anchoring protein RacA</fullName>
    </recommendedName>
</protein>
<comment type="function">
    <text evidence="1">Required for the formation of axial filaments and for anchoring the origin regions at the cell poles in sporulating cells, thus ensuring proper chromosome segregation in the prespore. Binds in a dispersed manner throughout the chromosome but preferentially to sites clustered in the origin portion of the chromosome, causing condensation of the chromosome and its remodeling into an elongated, anchored structure.</text>
</comment>
<comment type="subcellular location">
    <subcellularLocation>
        <location evidence="1">Cytoplasm</location>
    </subcellularLocation>
    <text evidence="1">Localizes to cell poles and nucleoid.</text>
</comment>
<comment type="similarity">
    <text evidence="1">Belongs to the RacA family.</text>
</comment>
<reference key="1">
    <citation type="journal article" date="2009" name="J. Bacteriol.">
        <title>Complete genome sequence of the extremophilic Bacillus cereus strain Q1 with industrial applications.</title>
        <authorList>
            <person name="Xiong Z."/>
            <person name="Jiang Y."/>
            <person name="Qi D."/>
            <person name="Lu H."/>
            <person name="Yang F."/>
            <person name="Yang J."/>
            <person name="Chen L."/>
            <person name="Sun L."/>
            <person name="Xu X."/>
            <person name="Xue Y."/>
            <person name="Zhu Y."/>
            <person name="Jin Q."/>
        </authorList>
    </citation>
    <scope>NUCLEOTIDE SEQUENCE [LARGE SCALE GENOMIC DNA]</scope>
    <source>
        <strain>Q1</strain>
    </source>
</reference>
<gene>
    <name evidence="1" type="primary">racA</name>
    <name type="ordered locus">BCQ_2223</name>
</gene>
<sequence length="180" mass="21354">MEYKTPFIAKKLGVSPKAVVRIAQQLNLTIEKNKYGHFIFTQDDLDQMLEYHLSQIEKSQNTHPTQKTSSNDVEELKTQVNTIVQNISSHDFEQLTAQLNTITRRLDRMEEQMQDKANDVVTYQLLQHRREMEEMLERIQKLEATLKKEEPIYITPDTKPIYEREKKPKRRKMIFSIFGL</sequence>
<keyword id="KW-0131">Cell cycle</keyword>
<keyword id="KW-0132">Cell division</keyword>
<keyword id="KW-0159">Chromosome partition</keyword>
<keyword id="KW-0175">Coiled coil</keyword>
<keyword id="KW-0963">Cytoplasm</keyword>
<keyword id="KW-0238">DNA-binding</keyword>
<keyword id="KW-0749">Sporulation</keyword>
<organism>
    <name type="scientific">Bacillus cereus (strain Q1)</name>
    <dbReference type="NCBI Taxonomy" id="361100"/>
    <lineage>
        <taxon>Bacteria</taxon>
        <taxon>Bacillati</taxon>
        <taxon>Bacillota</taxon>
        <taxon>Bacilli</taxon>
        <taxon>Bacillales</taxon>
        <taxon>Bacillaceae</taxon>
        <taxon>Bacillus</taxon>
        <taxon>Bacillus cereus group</taxon>
    </lineage>
</organism>
<accession>B9IZT9</accession>
<dbReference type="EMBL" id="CP000227">
    <property type="protein sequence ID" value="ACM12651.1"/>
    <property type="molecule type" value="Genomic_DNA"/>
</dbReference>
<dbReference type="SMR" id="B9IZT9"/>
<dbReference type="KEGG" id="bcq:BCQ_2223"/>
<dbReference type="HOGENOM" id="CLU_111022_0_0_9"/>
<dbReference type="Proteomes" id="UP000000441">
    <property type="component" value="Chromosome"/>
</dbReference>
<dbReference type="GO" id="GO:0005737">
    <property type="term" value="C:cytoplasm"/>
    <property type="evidence" value="ECO:0007669"/>
    <property type="project" value="UniProtKB-SubCell"/>
</dbReference>
<dbReference type="GO" id="GO:0003690">
    <property type="term" value="F:double-stranded DNA binding"/>
    <property type="evidence" value="ECO:0007669"/>
    <property type="project" value="UniProtKB-UniRule"/>
</dbReference>
<dbReference type="GO" id="GO:0008356">
    <property type="term" value="P:asymmetric cell division"/>
    <property type="evidence" value="ECO:0007669"/>
    <property type="project" value="UniProtKB-UniRule"/>
</dbReference>
<dbReference type="GO" id="GO:0030261">
    <property type="term" value="P:chromosome condensation"/>
    <property type="evidence" value="ECO:0007669"/>
    <property type="project" value="UniProtKB-UniRule"/>
</dbReference>
<dbReference type="GO" id="GO:0007059">
    <property type="term" value="P:chromosome segregation"/>
    <property type="evidence" value="ECO:0007669"/>
    <property type="project" value="UniProtKB-UniRule"/>
</dbReference>
<dbReference type="GO" id="GO:0030435">
    <property type="term" value="P:sporulation resulting in formation of a cellular spore"/>
    <property type="evidence" value="ECO:0007669"/>
    <property type="project" value="UniProtKB-UniRule"/>
</dbReference>
<dbReference type="Gene3D" id="1.10.1660.10">
    <property type="match status" value="1"/>
</dbReference>
<dbReference type="HAMAP" id="MF_01170">
    <property type="entry name" value="RacA"/>
    <property type="match status" value="1"/>
</dbReference>
<dbReference type="InterPro" id="IPR023522">
    <property type="entry name" value="Chrosome_anchoring_RacA"/>
</dbReference>
<dbReference type="NCBIfam" id="NF009646">
    <property type="entry name" value="PRK13182.1-1"/>
    <property type="match status" value="1"/>
</dbReference>
<dbReference type="SUPFAM" id="SSF58064">
    <property type="entry name" value="Influenza hemagglutinin (stalk)"/>
    <property type="match status" value="1"/>
</dbReference>